<sequence length="787" mass="86930">MRTRRPGQLWATLLALGALAGVVVGESNICTTRGVNSCQQCLAVSPVCAWCSDESLPQNSPRCNLKKNLLKDKCSPESIEFPVSEAQILEALPLSSKGSGDSAQITQVSPQRIALRLRPDDSKIFSLQVRQVEDYPVDIYYLMDLSFSMKDDLSSIQTLGTKLASQMRKLTSNLRIGFGAFVDKPVSPYMFISPPQAIKNPCYTMKSTCLPMFGYKHVLTLTDQVTRFNDEVKKQSVSRNRDAPEGGFDAIMQATVCDEKIGWRNDASHLLVFTTDAKTHIALDGRLAGIVLPNDGRCHIGPDNHYSASTTMDYPSLGLMTEKLSQKNINLIFAVTENVVSLYQNYSELIPGTTVGVLSDDSSNVLQLIVDAYGKIRSKVELEVRDLPEELSLSFNATCLNNEVIPGLKSCVGLKIGDTVSFSIEAKVRGCPQQKEQSFTIKPVGFKDSLTVQVTFDCDCDCQAFAQPLSPRCNNGNGTFECGVCRCDQGWLGSMCECSEEDYRPSQQEECSPKEGQPICSQRGECLCGQCVCHSSDFGKITGKYCECDDFSCVRYKGEMCSGHGQCNCGDCVCDSDWTGYYCNCTTRTDTCMSTNGLLCSGRGNCECGSCVCVQPGSYGDTCEKCPTCPDACSFKKDCVECKKFNRGKLHEENNCNRFCRDDIELVKELTDTGKNAVNCTYKNEDDCVVRFQYYEDSSGRAVLYVVEEPECPKGPDILVVLLSVMGAILLIGLATLLIWKLLITIHDRKEFAKFEEERARAKWDTANNPLYKEATSTFTNITYRGT</sequence>
<proteinExistence type="evidence at protein level"/>
<accession>Q8R2H2</accession>
<accession>M0RCF3</accession>
<evidence type="ECO:0000250" key="1">
    <source>
        <dbReference type="UniProtKB" id="O54890"/>
    </source>
</evidence>
<evidence type="ECO:0000250" key="2">
    <source>
        <dbReference type="UniProtKB" id="P05106"/>
    </source>
</evidence>
<evidence type="ECO:0000255" key="3"/>
<evidence type="ECO:0000255" key="4">
    <source>
        <dbReference type="PROSITE-ProRule" id="PRU01392"/>
    </source>
</evidence>
<evidence type="ECO:0000269" key="5">
    <source>
    </source>
</evidence>
<evidence type="ECO:0000269" key="6">
    <source>
    </source>
</evidence>
<evidence type="ECO:0000269" key="7">
    <source>
    </source>
</evidence>
<evidence type="ECO:0000305" key="8"/>
<evidence type="ECO:0000312" key="9">
    <source>
        <dbReference type="EMBL" id="CAD29521.1"/>
    </source>
</evidence>
<evidence type="ECO:0000312" key="10">
    <source>
        <dbReference type="RGD" id="628868"/>
    </source>
</evidence>
<reference evidence="9" key="1">
    <citation type="submission" date="2002-04" db="EMBL/GenBank/DDBJ databases">
        <title>Cloning of the rat integrin beta3 subunit.</title>
        <authorList>
            <person name="Stephan C."/>
            <person name="Hamacher M."/>
        </authorList>
    </citation>
    <scope>NUCLEOTIDE SEQUENCE [MRNA]</scope>
    <source>
        <strain evidence="9">Wistar</strain>
        <tissue evidence="9">Kidney</tissue>
    </source>
</reference>
<reference key="2">
    <citation type="journal article" date="2004" name="Nature">
        <title>Genome sequence of the Brown Norway rat yields insights into mammalian evolution.</title>
        <authorList>
            <person name="Gibbs R.A."/>
            <person name="Weinstock G.M."/>
            <person name="Metzker M.L."/>
            <person name="Muzny D.M."/>
            <person name="Sodergren E.J."/>
            <person name="Scherer S."/>
            <person name="Scott G."/>
            <person name="Steffen D."/>
            <person name="Worley K.C."/>
            <person name="Burch P.E."/>
            <person name="Okwuonu G."/>
            <person name="Hines S."/>
            <person name="Lewis L."/>
            <person name="Deramo C."/>
            <person name="Delgado O."/>
            <person name="Dugan-Rocha S."/>
            <person name="Miner G."/>
            <person name="Morgan M."/>
            <person name="Hawes A."/>
            <person name="Gill R."/>
            <person name="Holt R.A."/>
            <person name="Adams M.D."/>
            <person name="Amanatides P.G."/>
            <person name="Baden-Tillson H."/>
            <person name="Barnstead M."/>
            <person name="Chin S."/>
            <person name="Evans C.A."/>
            <person name="Ferriera S."/>
            <person name="Fosler C."/>
            <person name="Glodek A."/>
            <person name="Gu Z."/>
            <person name="Jennings D."/>
            <person name="Kraft C.L."/>
            <person name="Nguyen T."/>
            <person name="Pfannkoch C.M."/>
            <person name="Sitter C."/>
            <person name="Sutton G.G."/>
            <person name="Venter J.C."/>
            <person name="Woodage T."/>
            <person name="Smith D."/>
            <person name="Lee H.-M."/>
            <person name="Gustafson E."/>
            <person name="Cahill P."/>
            <person name="Kana A."/>
            <person name="Doucette-Stamm L."/>
            <person name="Weinstock K."/>
            <person name="Fechtel K."/>
            <person name="Weiss R.B."/>
            <person name="Dunn D.M."/>
            <person name="Green E.D."/>
            <person name="Blakesley R.W."/>
            <person name="Bouffard G.G."/>
            <person name="De Jong P.J."/>
            <person name="Osoegawa K."/>
            <person name="Zhu B."/>
            <person name="Marra M."/>
            <person name="Schein J."/>
            <person name="Bosdet I."/>
            <person name="Fjell C."/>
            <person name="Jones S."/>
            <person name="Krzywinski M."/>
            <person name="Mathewson C."/>
            <person name="Siddiqui A."/>
            <person name="Wye N."/>
            <person name="McPherson J."/>
            <person name="Zhao S."/>
            <person name="Fraser C.M."/>
            <person name="Shetty J."/>
            <person name="Shatsman S."/>
            <person name="Geer K."/>
            <person name="Chen Y."/>
            <person name="Abramzon S."/>
            <person name="Nierman W.C."/>
            <person name="Havlak P.H."/>
            <person name="Chen R."/>
            <person name="Durbin K.J."/>
            <person name="Egan A."/>
            <person name="Ren Y."/>
            <person name="Song X.-Z."/>
            <person name="Li B."/>
            <person name="Liu Y."/>
            <person name="Qin X."/>
            <person name="Cawley S."/>
            <person name="Cooney A.J."/>
            <person name="D'Souza L.M."/>
            <person name="Martin K."/>
            <person name="Wu J.Q."/>
            <person name="Gonzalez-Garay M.L."/>
            <person name="Jackson A.R."/>
            <person name="Kalafus K.J."/>
            <person name="McLeod M.P."/>
            <person name="Milosavljevic A."/>
            <person name="Virk D."/>
            <person name="Volkov A."/>
            <person name="Wheeler D.A."/>
            <person name="Zhang Z."/>
            <person name="Bailey J.A."/>
            <person name="Eichler E.E."/>
            <person name="Tuzun E."/>
            <person name="Birney E."/>
            <person name="Mongin E."/>
            <person name="Ureta-Vidal A."/>
            <person name="Woodwark C."/>
            <person name="Zdobnov E."/>
            <person name="Bork P."/>
            <person name="Suyama M."/>
            <person name="Torrents D."/>
            <person name="Alexandersson M."/>
            <person name="Trask B.J."/>
            <person name="Young J.M."/>
            <person name="Huang H."/>
            <person name="Wang H."/>
            <person name="Xing H."/>
            <person name="Daniels S."/>
            <person name="Gietzen D."/>
            <person name="Schmidt J."/>
            <person name="Stevens K."/>
            <person name="Vitt U."/>
            <person name="Wingrove J."/>
            <person name="Camara F."/>
            <person name="Mar Alba M."/>
            <person name="Abril J.F."/>
            <person name="Guigo R."/>
            <person name="Smit A."/>
            <person name="Dubchak I."/>
            <person name="Rubin E.M."/>
            <person name="Couronne O."/>
            <person name="Poliakov A."/>
            <person name="Huebner N."/>
            <person name="Ganten D."/>
            <person name="Goesele C."/>
            <person name="Hummel O."/>
            <person name="Kreitler T."/>
            <person name="Lee Y.-A."/>
            <person name="Monti J."/>
            <person name="Schulz H."/>
            <person name="Zimdahl H."/>
            <person name="Himmelbauer H."/>
            <person name="Lehrach H."/>
            <person name="Jacob H.J."/>
            <person name="Bromberg S."/>
            <person name="Gullings-Handley J."/>
            <person name="Jensen-Seaman M.I."/>
            <person name="Kwitek A.E."/>
            <person name="Lazar J."/>
            <person name="Pasko D."/>
            <person name="Tonellato P.J."/>
            <person name="Twigger S."/>
            <person name="Ponting C.P."/>
            <person name="Duarte J.M."/>
            <person name="Rice S."/>
            <person name="Goodstadt L."/>
            <person name="Beatson S.A."/>
            <person name="Emes R.D."/>
            <person name="Winter E.E."/>
            <person name="Webber C."/>
            <person name="Brandt P."/>
            <person name="Nyakatura G."/>
            <person name="Adetobi M."/>
            <person name="Chiaromonte F."/>
            <person name="Elnitski L."/>
            <person name="Eswara P."/>
            <person name="Hardison R.C."/>
            <person name="Hou M."/>
            <person name="Kolbe D."/>
            <person name="Makova K."/>
            <person name="Miller W."/>
            <person name="Nekrutenko A."/>
            <person name="Riemer C."/>
            <person name="Schwartz S."/>
            <person name="Taylor J."/>
            <person name="Yang S."/>
            <person name="Zhang Y."/>
            <person name="Lindpaintner K."/>
            <person name="Andrews T.D."/>
            <person name="Caccamo M."/>
            <person name="Clamp M."/>
            <person name="Clarke L."/>
            <person name="Curwen V."/>
            <person name="Durbin R.M."/>
            <person name="Eyras E."/>
            <person name="Searle S.M."/>
            <person name="Cooper G.M."/>
            <person name="Batzoglou S."/>
            <person name="Brudno M."/>
            <person name="Sidow A."/>
            <person name="Stone E.A."/>
            <person name="Payseur B.A."/>
            <person name="Bourque G."/>
            <person name="Lopez-Otin C."/>
            <person name="Puente X.S."/>
            <person name="Chakrabarti K."/>
            <person name="Chatterji S."/>
            <person name="Dewey C."/>
            <person name="Pachter L."/>
            <person name="Bray N."/>
            <person name="Yap V.B."/>
            <person name="Caspi A."/>
            <person name="Tesler G."/>
            <person name="Pevzner P.A."/>
            <person name="Haussler D."/>
            <person name="Roskin K.M."/>
            <person name="Baertsch R."/>
            <person name="Clawson H."/>
            <person name="Furey T.S."/>
            <person name="Hinrichs A.S."/>
            <person name="Karolchik D."/>
            <person name="Kent W.J."/>
            <person name="Rosenbloom K.R."/>
            <person name="Trumbower H."/>
            <person name="Weirauch M."/>
            <person name="Cooper D.N."/>
            <person name="Stenson P.D."/>
            <person name="Ma B."/>
            <person name="Brent M."/>
            <person name="Arumugam M."/>
            <person name="Shteynberg D."/>
            <person name="Copley R.R."/>
            <person name="Taylor M.S."/>
            <person name="Riethman H."/>
            <person name="Mudunuri U."/>
            <person name="Peterson J."/>
            <person name="Guyer M."/>
            <person name="Felsenfeld A."/>
            <person name="Old S."/>
            <person name="Mockrin S."/>
            <person name="Collins F.S."/>
        </authorList>
    </citation>
    <scope>NUCLEOTIDE SEQUENCE [LARGE SCALE GENOMIC DNA]</scope>
    <source>
        <strain>Brown Norway</strain>
    </source>
</reference>
<reference key="3">
    <citation type="journal article" date="2000" name="Exp. Cell Res.">
        <title>Activation of integrin alpha(V)beta(3) regulates cell adhesion and migration to bone sialoprotein.</title>
        <authorList>
            <person name="Byzova T.V."/>
            <person name="Kim W."/>
            <person name="Midura R.J."/>
            <person name="Plow E.F."/>
        </authorList>
    </citation>
    <scope>FUNCTION</scope>
</reference>
<reference key="4">
    <citation type="journal article" date="2008" name="Neuron">
        <title>Activity-dependent regulation of synaptic AMPA receptor composition and abundance by beta3 integrins.</title>
        <authorList>
            <person name="Cingolani L.A."/>
            <person name="Thalhammer A."/>
            <person name="Yu L.M."/>
            <person name="Catalano M."/>
            <person name="Ramos T."/>
            <person name="Colicos M.A."/>
            <person name="Goda Y."/>
        </authorList>
    </citation>
    <scope>FUNCTION</scope>
    <scope>SUBCELLULAR LOCATION</scope>
</reference>
<reference key="5">
    <citation type="journal article" date="2008" name="J. Clin. Invest.">
        <title>Interactions between integrin alphaIIbbeta3 and the serotonin transporter regulate serotonin transport and platelet aggregation in mice and humans.</title>
        <authorList>
            <person name="Carneiro A.M."/>
            <person name="Cook E.H."/>
            <person name="Murphy D.L."/>
            <person name="Blakely R.D."/>
        </authorList>
    </citation>
    <scope>INTERACTION WITH SLC6A4</scope>
</reference>
<keyword id="KW-0106">Calcium</keyword>
<keyword id="KW-0130">Cell adhesion</keyword>
<keyword id="KW-0965">Cell junction</keyword>
<keyword id="KW-1003">Cell membrane</keyword>
<keyword id="KW-0966">Cell projection</keyword>
<keyword id="KW-1015">Disulfide bond</keyword>
<keyword id="KW-0245">EGF-like domain</keyword>
<keyword id="KW-0325">Glycoprotein</keyword>
<keyword id="KW-0401">Integrin</keyword>
<keyword id="KW-0460">Magnesium</keyword>
<keyword id="KW-0472">Membrane</keyword>
<keyword id="KW-0479">Metal-binding</keyword>
<keyword id="KW-0597">Phosphoprotein</keyword>
<keyword id="KW-0628">Postsynaptic cell membrane</keyword>
<keyword id="KW-1185">Reference proteome</keyword>
<keyword id="KW-0677">Repeat</keyword>
<keyword id="KW-0732">Signal</keyword>
<keyword id="KW-0770">Synapse</keyword>
<keyword id="KW-0812">Transmembrane</keyword>
<keyword id="KW-1133">Transmembrane helix</keyword>
<gene>
    <name evidence="10" type="primary">Itgb3</name>
</gene>
<name>ITB3_RAT</name>
<dbReference type="EMBL" id="AJ440952">
    <property type="protein sequence ID" value="CAD29521.1"/>
    <property type="molecule type" value="mRNA"/>
</dbReference>
<dbReference type="EMBL" id="AABR07030536">
    <property type="status" value="NOT_ANNOTATED_CDS"/>
    <property type="molecule type" value="Genomic_DNA"/>
</dbReference>
<dbReference type="EMBL" id="AABR07030537">
    <property type="status" value="NOT_ANNOTATED_CDS"/>
    <property type="molecule type" value="Genomic_DNA"/>
</dbReference>
<dbReference type="EMBL" id="AABR07030538">
    <property type="status" value="NOT_ANNOTATED_CDS"/>
    <property type="molecule type" value="Genomic_DNA"/>
</dbReference>
<dbReference type="EMBL" id="AABR07030539">
    <property type="status" value="NOT_ANNOTATED_CDS"/>
    <property type="molecule type" value="Genomic_DNA"/>
</dbReference>
<dbReference type="EMBL" id="AABR07030540">
    <property type="status" value="NOT_ANNOTATED_CDS"/>
    <property type="molecule type" value="Genomic_DNA"/>
</dbReference>
<dbReference type="EMBL" id="AABR07030541">
    <property type="status" value="NOT_ANNOTATED_CDS"/>
    <property type="molecule type" value="Genomic_DNA"/>
</dbReference>
<dbReference type="EMBL" id="AABR07030542">
    <property type="status" value="NOT_ANNOTATED_CDS"/>
    <property type="molecule type" value="Genomic_DNA"/>
</dbReference>
<dbReference type="EMBL" id="AABR07030543">
    <property type="status" value="NOT_ANNOTATED_CDS"/>
    <property type="molecule type" value="Genomic_DNA"/>
</dbReference>
<dbReference type="EMBL" id="AABR07030544">
    <property type="status" value="NOT_ANNOTATED_CDS"/>
    <property type="molecule type" value="Genomic_DNA"/>
</dbReference>
<dbReference type="PIR" id="PN0509">
    <property type="entry name" value="PN0509"/>
</dbReference>
<dbReference type="RefSeq" id="NP_714942.1">
    <property type="nucleotide sequence ID" value="NM_153720.2"/>
</dbReference>
<dbReference type="SMR" id="Q8R2H2"/>
<dbReference type="CORUM" id="Q8R2H2"/>
<dbReference type="FunCoup" id="Q8R2H2">
    <property type="interactions" value="1862"/>
</dbReference>
<dbReference type="STRING" id="10116.ENSRNOP00000067271"/>
<dbReference type="BindingDB" id="Q8R2H2"/>
<dbReference type="ChEMBL" id="CHEMBL4296069"/>
<dbReference type="GlyCosmos" id="Q8R2H2">
    <property type="glycosylation" value="5 sites, No reported glycans"/>
</dbReference>
<dbReference type="GlyGen" id="Q8R2H2">
    <property type="glycosylation" value="5 sites"/>
</dbReference>
<dbReference type="PhosphoSitePlus" id="Q8R2H2"/>
<dbReference type="Ensembl" id="ENSRNOT00000073350.3">
    <property type="protein sequence ID" value="ENSRNOP00000067271.3"/>
    <property type="gene ID" value="ENSRNOG00000048449.3"/>
</dbReference>
<dbReference type="GeneID" id="29302"/>
<dbReference type="KEGG" id="rno:29302"/>
<dbReference type="AGR" id="RGD:628868"/>
<dbReference type="CTD" id="3690"/>
<dbReference type="RGD" id="628868">
    <property type="gene designation" value="Itgb3"/>
</dbReference>
<dbReference type="GeneTree" id="ENSGT01110000267169"/>
<dbReference type="HOGENOM" id="CLU_011772_0_1_1"/>
<dbReference type="InParanoid" id="Q8R2H2"/>
<dbReference type="OMA" id="AKWDTTH"/>
<dbReference type="OrthoDB" id="17679at9989"/>
<dbReference type="PhylomeDB" id="Q8R2H2"/>
<dbReference type="Reactome" id="R-RNO-114608">
    <property type="pathway name" value="Platelet degranulation"/>
</dbReference>
<dbReference type="Reactome" id="R-RNO-1566948">
    <property type="pathway name" value="Elastic fibre formation"/>
</dbReference>
<dbReference type="Reactome" id="R-RNO-210990">
    <property type="pathway name" value="PECAM1 interactions"/>
</dbReference>
<dbReference type="Reactome" id="R-RNO-2129379">
    <property type="pathway name" value="Molecules associated with elastic fibres"/>
</dbReference>
<dbReference type="Reactome" id="R-RNO-216083">
    <property type="pathway name" value="Integrin cell surface interactions"/>
</dbReference>
<dbReference type="Reactome" id="R-RNO-2173789">
    <property type="pathway name" value="TGF-beta receptor signaling activates SMADs"/>
</dbReference>
<dbReference type="Reactome" id="R-RNO-3000170">
    <property type="pathway name" value="Syndecan interactions"/>
</dbReference>
<dbReference type="Reactome" id="R-RNO-3000178">
    <property type="pathway name" value="ECM proteoglycans"/>
</dbReference>
<dbReference type="Reactome" id="R-RNO-354192">
    <property type="pathway name" value="Integrin signaling"/>
</dbReference>
<dbReference type="Reactome" id="R-RNO-354194">
    <property type="pathway name" value="GRB2:SOS provides linkage to MAPK signaling for Integrins"/>
</dbReference>
<dbReference type="Reactome" id="R-RNO-372708">
    <property type="pathway name" value="p130Cas linkage to MAPK signaling for integrins"/>
</dbReference>
<dbReference type="Reactome" id="R-RNO-4420097">
    <property type="pathway name" value="VEGFA-VEGFR2 Pathway"/>
</dbReference>
<dbReference type="Reactome" id="R-RNO-445144">
    <property type="pathway name" value="Signal transduction by L1"/>
</dbReference>
<dbReference type="Reactome" id="R-RNO-5674135">
    <property type="pathway name" value="MAP2K and MAPK activation"/>
</dbReference>
<dbReference type="Reactome" id="R-RNO-9860927">
    <property type="pathway name" value="Turbulent (oscillatory, disturbed) flow shear stress activates signaling by PIEZO1 and integrins in endothelial cells"/>
</dbReference>
<dbReference type="PRO" id="PR:Q8R2H2"/>
<dbReference type="Proteomes" id="UP000002494">
    <property type="component" value="Chromosome 10"/>
</dbReference>
<dbReference type="GO" id="GO:0071133">
    <property type="term" value="C:alpha9-beta1 integrin-ADAM8 complex"/>
    <property type="evidence" value="ECO:0000266"/>
    <property type="project" value="RGD"/>
</dbReference>
<dbReference type="GO" id="GO:0035868">
    <property type="term" value="C:alphav-beta3 integrin-HMGB1 complex"/>
    <property type="evidence" value="ECO:0000266"/>
    <property type="project" value="RGD"/>
</dbReference>
<dbReference type="GO" id="GO:0035867">
    <property type="term" value="C:alphav-beta3 integrin-IGF-1-IGF1R complex"/>
    <property type="evidence" value="ECO:0000266"/>
    <property type="project" value="RGD"/>
</dbReference>
<dbReference type="GO" id="GO:0035866">
    <property type="term" value="C:alphav-beta3 integrin-PKCalpha complex"/>
    <property type="evidence" value="ECO:0000266"/>
    <property type="project" value="RGD"/>
</dbReference>
<dbReference type="GO" id="GO:0016324">
    <property type="term" value="C:apical plasma membrane"/>
    <property type="evidence" value="ECO:0000314"/>
    <property type="project" value="RGD"/>
</dbReference>
<dbReference type="GO" id="GO:0009986">
    <property type="term" value="C:cell surface"/>
    <property type="evidence" value="ECO:0000314"/>
    <property type="project" value="RGD"/>
</dbReference>
<dbReference type="GO" id="GO:0005911">
    <property type="term" value="C:cell-cell junction"/>
    <property type="evidence" value="ECO:0000266"/>
    <property type="project" value="RGD"/>
</dbReference>
<dbReference type="GO" id="GO:0009897">
    <property type="term" value="C:external side of plasma membrane"/>
    <property type="evidence" value="ECO:0000266"/>
    <property type="project" value="RGD"/>
</dbReference>
<dbReference type="GO" id="GO:0031527">
    <property type="term" value="C:filopodium membrane"/>
    <property type="evidence" value="ECO:0000266"/>
    <property type="project" value="RGD"/>
</dbReference>
<dbReference type="GO" id="GO:0005925">
    <property type="term" value="C:focal adhesion"/>
    <property type="evidence" value="ECO:0000314"/>
    <property type="project" value="RGD"/>
</dbReference>
<dbReference type="GO" id="GO:0098978">
    <property type="term" value="C:glutamatergic synapse"/>
    <property type="evidence" value="ECO:0000266"/>
    <property type="project" value="RGD"/>
</dbReference>
<dbReference type="GO" id="GO:0098690">
    <property type="term" value="C:glycinergic synapse"/>
    <property type="evidence" value="ECO:0000314"/>
    <property type="project" value="SynGO"/>
</dbReference>
<dbReference type="GO" id="GO:0070442">
    <property type="term" value="C:integrin alphaIIb-beta3 complex"/>
    <property type="evidence" value="ECO:0000266"/>
    <property type="project" value="RGD"/>
</dbReference>
<dbReference type="GO" id="GO:0034683">
    <property type="term" value="C:integrin alphav-beta3 complex"/>
    <property type="evidence" value="ECO:0000266"/>
    <property type="project" value="RGD"/>
</dbReference>
<dbReference type="GO" id="GO:0008305">
    <property type="term" value="C:integrin complex"/>
    <property type="evidence" value="ECO:0000314"/>
    <property type="project" value="RGD"/>
</dbReference>
<dbReference type="GO" id="GO:0031258">
    <property type="term" value="C:lamellipodium membrane"/>
    <property type="evidence" value="ECO:0000266"/>
    <property type="project" value="RGD"/>
</dbReference>
<dbReference type="GO" id="GO:0042470">
    <property type="term" value="C:melanosome"/>
    <property type="evidence" value="ECO:0000266"/>
    <property type="project" value="RGD"/>
</dbReference>
<dbReference type="GO" id="GO:0031528">
    <property type="term" value="C:microvillus membrane"/>
    <property type="evidence" value="ECO:0000266"/>
    <property type="project" value="RGD"/>
</dbReference>
<dbReference type="GO" id="GO:0005654">
    <property type="term" value="C:nucleoplasm"/>
    <property type="evidence" value="ECO:0007669"/>
    <property type="project" value="Ensembl"/>
</dbReference>
<dbReference type="GO" id="GO:0005634">
    <property type="term" value="C:nucleus"/>
    <property type="evidence" value="ECO:0000266"/>
    <property type="project" value="RGD"/>
</dbReference>
<dbReference type="GO" id="GO:0005886">
    <property type="term" value="C:plasma membrane"/>
    <property type="evidence" value="ECO:0000266"/>
    <property type="project" value="RGD"/>
</dbReference>
<dbReference type="GO" id="GO:0045211">
    <property type="term" value="C:postsynaptic membrane"/>
    <property type="evidence" value="ECO:0007669"/>
    <property type="project" value="UniProtKB-SubCell"/>
</dbReference>
<dbReference type="GO" id="GO:0032991">
    <property type="term" value="C:protein-containing complex"/>
    <property type="evidence" value="ECO:0000266"/>
    <property type="project" value="RGD"/>
</dbReference>
<dbReference type="GO" id="GO:0043235">
    <property type="term" value="C:receptor complex"/>
    <property type="evidence" value="ECO:0000266"/>
    <property type="project" value="RGD"/>
</dbReference>
<dbReference type="GO" id="GO:0032587">
    <property type="term" value="C:ruffle membrane"/>
    <property type="evidence" value="ECO:0000266"/>
    <property type="project" value="RGD"/>
</dbReference>
<dbReference type="GO" id="GO:0045202">
    <property type="term" value="C:synapse"/>
    <property type="evidence" value="ECO:0000250"/>
    <property type="project" value="UniProtKB"/>
</dbReference>
<dbReference type="GO" id="GO:0097060">
    <property type="term" value="C:synaptic membrane"/>
    <property type="evidence" value="ECO:0000266"/>
    <property type="project" value="RGD"/>
</dbReference>
<dbReference type="GO" id="GO:0019960">
    <property type="term" value="F:C-X3-C chemokine binding"/>
    <property type="evidence" value="ECO:0007669"/>
    <property type="project" value="Ensembl"/>
</dbReference>
<dbReference type="GO" id="GO:0050839">
    <property type="term" value="F:cell adhesion molecule binding"/>
    <property type="evidence" value="ECO:0000266"/>
    <property type="project" value="RGD"/>
</dbReference>
<dbReference type="GO" id="GO:0019899">
    <property type="term" value="F:enzyme binding"/>
    <property type="evidence" value="ECO:0000266"/>
    <property type="project" value="RGD"/>
</dbReference>
<dbReference type="GO" id="GO:0050840">
    <property type="term" value="F:extracellular matrix binding"/>
    <property type="evidence" value="ECO:0000266"/>
    <property type="project" value="RGD"/>
</dbReference>
<dbReference type="GO" id="GO:0017134">
    <property type="term" value="F:fibroblast growth factor binding"/>
    <property type="evidence" value="ECO:0007669"/>
    <property type="project" value="Ensembl"/>
</dbReference>
<dbReference type="GO" id="GO:0001968">
    <property type="term" value="F:fibronectin binding"/>
    <property type="evidence" value="ECO:0000266"/>
    <property type="project" value="RGD"/>
</dbReference>
<dbReference type="GO" id="GO:0042802">
    <property type="term" value="F:identical protein binding"/>
    <property type="evidence" value="ECO:0000266"/>
    <property type="project" value="RGD"/>
</dbReference>
<dbReference type="GO" id="GO:0031994">
    <property type="term" value="F:insulin-like growth factor I binding"/>
    <property type="evidence" value="ECO:0007669"/>
    <property type="project" value="Ensembl"/>
</dbReference>
<dbReference type="GO" id="GO:0005178">
    <property type="term" value="F:integrin binding"/>
    <property type="evidence" value="ECO:0000266"/>
    <property type="project" value="RGD"/>
</dbReference>
<dbReference type="GO" id="GO:0046872">
    <property type="term" value="F:metal ion binding"/>
    <property type="evidence" value="ECO:0007669"/>
    <property type="project" value="UniProtKB-KW"/>
</dbReference>
<dbReference type="GO" id="GO:0038132">
    <property type="term" value="F:neuregulin binding"/>
    <property type="evidence" value="ECO:0007669"/>
    <property type="project" value="Ensembl"/>
</dbReference>
<dbReference type="GO" id="GO:0002020">
    <property type="term" value="F:protease binding"/>
    <property type="evidence" value="ECO:0000266"/>
    <property type="project" value="RGD"/>
</dbReference>
<dbReference type="GO" id="GO:0003756">
    <property type="term" value="F:protein disulfide isomerase activity"/>
    <property type="evidence" value="ECO:0000266"/>
    <property type="project" value="RGD"/>
</dbReference>
<dbReference type="GO" id="GO:0005080">
    <property type="term" value="F:protein kinase C binding"/>
    <property type="evidence" value="ECO:0000266"/>
    <property type="project" value="RGD"/>
</dbReference>
<dbReference type="GO" id="GO:0043184">
    <property type="term" value="F:vascular endothelial growth factor receptor 2 binding"/>
    <property type="evidence" value="ECO:0000266"/>
    <property type="project" value="RGD"/>
</dbReference>
<dbReference type="GO" id="GO:0038027">
    <property type="term" value="P:apolipoprotein A-I-mediated signaling pathway"/>
    <property type="evidence" value="ECO:0000266"/>
    <property type="project" value="RGD"/>
</dbReference>
<dbReference type="GO" id="GO:0043277">
    <property type="term" value="P:apoptotic cell clearance"/>
    <property type="evidence" value="ECO:0000266"/>
    <property type="project" value="RGD"/>
</dbReference>
<dbReference type="GO" id="GO:0072378">
    <property type="term" value="P:blood coagulation, fibrin clot formation"/>
    <property type="evidence" value="ECO:0000266"/>
    <property type="project" value="RGD"/>
</dbReference>
<dbReference type="GO" id="GO:0007155">
    <property type="term" value="P:cell adhesion"/>
    <property type="evidence" value="ECO:0000304"/>
    <property type="project" value="RGD"/>
</dbReference>
<dbReference type="GO" id="GO:0033627">
    <property type="term" value="P:cell adhesion mediated by integrin"/>
    <property type="evidence" value="ECO:0000266"/>
    <property type="project" value="RGD"/>
</dbReference>
<dbReference type="GO" id="GO:0016477">
    <property type="term" value="P:cell migration"/>
    <property type="evidence" value="ECO:0000318"/>
    <property type="project" value="GO_Central"/>
</dbReference>
<dbReference type="GO" id="GO:0007160">
    <property type="term" value="P:cell-matrix adhesion"/>
    <property type="evidence" value="ECO:0000266"/>
    <property type="project" value="RGD"/>
</dbReference>
<dbReference type="GO" id="GO:0031589">
    <property type="term" value="P:cell-substrate adhesion"/>
    <property type="evidence" value="ECO:0000266"/>
    <property type="project" value="RGD"/>
</dbReference>
<dbReference type="GO" id="GO:0007044">
    <property type="term" value="P:cell-substrate junction assembly"/>
    <property type="evidence" value="ECO:0000266"/>
    <property type="project" value="RGD"/>
</dbReference>
<dbReference type="GO" id="GO:1990314">
    <property type="term" value="P:cellular response to insulin-like growth factor stimulus"/>
    <property type="evidence" value="ECO:0000270"/>
    <property type="project" value="RGD"/>
</dbReference>
<dbReference type="GO" id="GO:0071260">
    <property type="term" value="P:cellular response to mechanical stimulus"/>
    <property type="evidence" value="ECO:0000270"/>
    <property type="project" value="RGD"/>
</dbReference>
<dbReference type="GO" id="GO:0036120">
    <property type="term" value="P:cellular response to platelet-derived growth factor stimulus"/>
    <property type="evidence" value="ECO:0000266"/>
    <property type="project" value="RGD"/>
</dbReference>
<dbReference type="GO" id="GO:0071466">
    <property type="term" value="P:cellular response to xenobiotic stimulus"/>
    <property type="evidence" value="ECO:0000270"/>
    <property type="project" value="RGD"/>
</dbReference>
<dbReference type="GO" id="GO:0007566">
    <property type="term" value="P:embryo implantation"/>
    <property type="evidence" value="ECO:0000270"/>
    <property type="project" value="RGD"/>
</dbReference>
<dbReference type="GO" id="GO:0034113">
    <property type="term" value="P:heterotypic cell-cell adhesion"/>
    <property type="evidence" value="ECO:0000266"/>
    <property type="project" value="RGD"/>
</dbReference>
<dbReference type="GO" id="GO:0007229">
    <property type="term" value="P:integrin-mediated signaling pathway"/>
    <property type="evidence" value="ECO:0000266"/>
    <property type="project" value="RGD"/>
</dbReference>
<dbReference type="GO" id="GO:0098880">
    <property type="term" value="P:maintenance of postsynaptic specialization structure"/>
    <property type="evidence" value="ECO:0000314"/>
    <property type="project" value="SynGO"/>
</dbReference>
<dbReference type="GO" id="GO:0048333">
    <property type="term" value="P:mesodermal cell differentiation"/>
    <property type="evidence" value="ECO:0000266"/>
    <property type="project" value="RGD"/>
</dbReference>
<dbReference type="GO" id="GO:0050919">
    <property type="term" value="P:negative chemotaxis"/>
    <property type="evidence" value="ECO:0000266"/>
    <property type="project" value="RGD"/>
</dbReference>
<dbReference type="GO" id="GO:2000352">
    <property type="term" value="P:negative regulation of endothelial cell apoptotic process"/>
    <property type="evidence" value="ECO:0000315"/>
    <property type="project" value="RGD"/>
</dbReference>
<dbReference type="GO" id="GO:0010888">
    <property type="term" value="P:negative regulation of lipid storage"/>
    <property type="evidence" value="ECO:0000266"/>
    <property type="project" value="RGD"/>
</dbReference>
<dbReference type="GO" id="GO:0032369">
    <property type="term" value="P:negative regulation of lipid transport"/>
    <property type="evidence" value="ECO:0000266"/>
    <property type="project" value="RGD"/>
</dbReference>
<dbReference type="GO" id="GO:0050748">
    <property type="term" value="P:negative regulation of lipoprotein metabolic process"/>
    <property type="evidence" value="ECO:0000266"/>
    <property type="project" value="RGD"/>
</dbReference>
<dbReference type="GO" id="GO:0010989">
    <property type="term" value="P:negative regulation of low-density lipoprotein particle clearance"/>
    <property type="evidence" value="ECO:0007669"/>
    <property type="project" value="Ensembl"/>
</dbReference>
<dbReference type="GO" id="GO:0010745">
    <property type="term" value="P:negative regulation of macrophage derived foam cell differentiation"/>
    <property type="evidence" value="ECO:0000266"/>
    <property type="project" value="RGD"/>
</dbReference>
<dbReference type="GO" id="GO:0030168">
    <property type="term" value="P:platelet activation"/>
    <property type="evidence" value="ECO:0000266"/>
    <property type="project" value="RGD"/>
</dbReference>
<dbReference type="GO" id="GO:0070527">
    <property type="term" value="P:platelet aggregation"/>
    <property type="evidence" value="ECO:0000266"/>
    <property type="project" value="RGD"/>
</dbReference>
<dbReference type="GO" id="GO:0048008">
    <property type="term" value="P:platelet-derived growth factor receptor signaling pathway"/>
    <property type="evidence" value="ECO:0000266"/>
    <property type="project" value="RGD"/>
</dbReference>
<dbReference type="GO" id="GO:1900731">
    <property type="term" value="P:positive regulation of adenylate cyclase-inhibiting opioid receptor signaling pathway"/>
    <property type="evidence" value="ECO:0000315"/>
    <property type="project" value="RGD"/>
</dbReference>
<dbReference type="GO" id="GO:0045766">
    <property type="term" value="P:positive regulation of angiogenesis"/>
    <property type="evidence" value="ECO:0000315"/>
    <property type="project" value="RGD"/>
</dbReference>
<dbReference type="GO" id="GO:0045780">
    <property type="term" value="P:positive regulation of bone resorption"/>
    <property type="evidence" value="ECO:0000315"/>
    <property type="project" value="RGD"/>
</dbReference>
<dbReference type="GO" id="GO:0033630">
    <property type="term" value="P:positive regulation of cell adhesion mediated by integrin"/>
    <property type="evidence" value="ECO:0000315"/>
    <property type="project" value="RGD"/>
</dbReference>
<dbReference type="GO" id="GO:0030335">
    <property type="term" value="P:positive regulation of cell migration"/>
    <property type="evidence" value="ECO:0000266"/>
    <property type="project" value="RGD"/>
</dbReference>
<dbReference type="GO" id="GO:0001954">
    <property type="term" value="P:positive regulation of cell-matrix adhesion"/>
    <property type="evidence" value="ECO:0000266"/>
    <property type="project" value="RGD"/>
</dbReference>
<dbReference type="GO" id="GO:0010595">
    <property type="term" value="P:positive regulation of endothelial cell migration"/>
    <property type="evidence" value="ECO:0000266"/>
    <property type="project" value="RGD"/>
</dbReference>
<dbReference type="GO" id="GO:0001938">
    <property type="term" value="P:positive regulation of endothelial cell proliferation"/>
    <property type="evidence" value="ECO:0000266"/>
    <property type="project" value="RGD"/>
</dbReference>
<dbReference type="GO" id="GO:0070374">
    <property type="term" value="P:positive regulation of ERK1 and ERK2 cascade"/>
    <property type="evidence" value="ECO:0000315"/>
    <property type="project" value="RGD"/>
</dbReference>
<dbReference type="GO" id="GO:0010763">
    <property type="term" value="P:positive regulation of fibroblast migration"/>
    <property type="evidence" value="ECO:0000315"/>
    <property type="project" value="RGD"/>
</dbReference>
<dbReference type="GO" id="GO:0048146">
    <property type="term" value="P:positive regulation of fibroblast proliferation"/>
    <property type="evidence" value="ECO:0000266"/>
    <property type="project" value="RGD"/>
</dbReference>
<dbReference type="GO" id="GO:0010628">
    <property type="term" value="P:positive regulation of gene expression"/>
    <property type="evidence" value="ECO:0000266"/>
    <property type="project" value="RGD"/>
</dbReference>
<dbReference type="GO" id="GO:0072126">
    <property type="term" value="P:positive regulation of glomerular mesangial cell proliferation"/>
    <property type="evidence" value="ECO:0000315"/>
    <property type="project" value="RGD"/>
</dbReference>
<dbReference type="GO" id="GO:0002687">
    <property type="term" value="P:positive regulation of leukocyte migration"/>
    <property type="evidence" value="ECO:0000315"/>
    <property type="project" value="RGD"/>
</dbReference>
<dbReference type="GO" id="GO:0033690">
    <property type="term" value="P:positive regulation of osteoblast proliferation"/>
    <property type="evidence" value="ECO:0000266"/>
    <property type="project" value="RGD"/>
</dbReference>
<dbReference type="GO" id="GO:0014911">
    <property type="term" value="P:positive regulation of smooth muscle cell migration"/>
    <property type="evidence" value="ECO:0000315"/>
    <property type="project" value="RGD"/>
</dbReference>
<dbReference type="GO" id="GO:0048661">
    <property type="term" value="P:positive regulation of smooth muscle cell proliferation"/>
    <property type="evidence" value="ECO:0000315"/>
    <property type="project" value="RGD"/>
</dbReference>
<dbReference type="GO" id="GO:1900026">
    <property type="term" value="P:positive regulation of substrate adhesion-dependent cell spreading"/>
    <property type="evidence" value="ECO:0000266"/>
    <property type="project" value="RGD"/>
</dbReference>
<dbReference type="GO" id="GO:2000406">
    <property type="term" value="P:positive regulation of T cell migration"/>
    <property type="evidence" value="ECO:0000266"/>
    <property type="project" value="RGD"/>
</dbReference>
<dbReference type="GO" id="GO:1900748">
    <property type="term" value="P:positive regulation of vascular endothelial growth factor signaling pathway"/>
    <property type="evidence" value="ECO:0000266"/>
    <property type="project" value="RGD"/>
</dbReference>
<dbReference type="GO" id="GO:0032956">
    <property type="term" value="P:regulation of actin cytoskeleton organization"/>
    <property type="evidence" value="ECO:0000266"/>
    <property type="project" value="RGD"/>
</dbReference>
<dbReference type="GO" id="GO:1903053">
    <property type="term" value="P:regulation of extracellular matrix organization"/>
    <property type="evidence" value="ECO:0000266"/>
    <property type="project" value="RGD"/>
</dbReference>
<dbReference type="GO" id="GO:0008277">
    <property type="term" value="P:regulation of G protein-coupled receptor signaling pathway"/>
    <property type="evidence" value="ECO:0000315"/>
    <property type="project" value="RGD"/>
</dbReference>
<dbReference type="GO" id="GO:0150054">
    <property type="term" value="P:regulation of postsynaptic neurotransmitter receptor diffusion trapping"/>
    <property type="evidence" value="ECO:0000314"/>
    <property type="project" value="SynGO"/>
</dbReference>
<dbReference type="GO" id="GO:0099149">
    <property type="term" value="P:regulation of postsynaptic neurotransmitter receptor internalization"/>
    <property type="evidence" value="ECO:0000266"/>
    <property type="project" value="RGD"/>
</dbReference>
<dbReference type="GO" id="GO:0032880">
    <property type="term" value="P:regulation of protein localization"/>
    <property type="evidence" value="ECO:0000250"/>
    <property type="project" value="UniProtKB"/>
</dbReference>
<dbReference type="GO" id="GO:0051279">
    <property type="term" value="P:regulation of release of sequestered calcium ion into cytosol"/>
    <property type="evidence" value="ECO:0000314"/>
    <property type="project" value="RGD"/>
</dbReference>
<dbReference type="GO" id="GO:0051611">
    <property type="term" value="P:regulation of serotonin uptake"/>
    <property type="evidence" value="ECO:0000250"/>
    <property type="project" value="UniProtKB"/>
</dbReference>
<dbReference type="GO" id="GO:1901163">
    <property type="term" value="P:regulation of trophoblast cell migration"/>
    <property type="evidence" value="ECO:0000266"/>
    <property type="project" value="RGD"/>
</dbReference>
<dbReference type="GO" id="GO:0014823">
    <property type="term" value="P:response to activity"/>
    <property type="evidence" value="ECO:0000270"/>
    <property type="project" value="RGD"/>
</dbReference>
<dbReference type="GO" id="GO:0036119">
    <property type="term" value="P:response to platelet-derived growth factor"/>
    <property type="evidence" value="ECO:0000270"/>
    <property type="project" value="RGD"/>
</dbReference>
<dbReference type="GO" id="GO:0014909">
    <property type="term" value="P:smooth muscle cell migration"/>
    <property type="evidence" value="ECO:0000266"/>
    <property type="project" value="RGD"/>
</dbReference>
<dbReference type="GO" id="GO:0034446">
    <property type="term" value="P:substrate adhesion-dependent cell spreading"/>
    <property type="evidence" value="ECO:0000266"/>
    <property type="project" value="RGD"/>
</dbReference>
<dbReference type="GO" id="GO:0046718">
    <property type="term" value="P:symbiont entry into host cell"/>
    <property type="evidence" value="ECO:0007669"/>
    <property type="project" value="Ensembl"/>
</dbReference>
<dbReference type="FunFam" id="1.20.5.100:FF:000002">
    <property type="entry name" value="Integrin beta"/>
    <property type="match status" value="1"/>
</dbReference>
<dbReference type="FunFam" id="2.10.25.10:FF:000036">
    <property type="entry name" value="Integrin beta"/>
    <property type="match status" value="1"/>
</dbReference>
<dbReference type="FunFam" id="2.10.25.10:FF:000075">
    <property type="entry name" value="Integrin beta"/>
    <property type="match status" value="1"/>
</dbReference>
<dbReference type="FunFam" id="2.60.40.1510:FF:000004">
    <property type="entry name" value="Integrin beta"/>
    <property type="match status" value="1"/>
</dbReference>
<dbReference type="FunFam" id="3.30.1680.10:FF:000002">
    <property type="entry name" value="Integrin beta"/>
    <property type="match status" value="1"/>
</dbReference>
<dbReference type="FunFam" id="3.40.50.410:FF:000002">
    <property type="entry name" value="Integrin beta"/>
    <property type="match status" value="1"/>
</dbReference>
<dbReference type="FunFam" id="4.10.1240.30:FF:000001">
    <property type="entry name" value="Integrin beta"/>
    <property type="match status" value="1"/>
</dbReference>
<dbReference type="Gene3D" id="4.10.1240.30">
    <property type="match status" value="1"/>
</dbReference>
<dbReference type="Gene3D" id="1.20.5.100">
    <property type="entry name" value="Cytochrome c1, transmembrane anchor, C-terminal"/>
    <property type="match status" value="1"/>
</dbReference>
<dbReference type="Gene3D" id="2.10.25.10">
    <property type="entry name" value="Laminin"/>
    <property type="match status" value="4"/>
</dbReference>
<dbReference type="Gene3D" id="3.30.1680.10">
    <property type="entry name" value="ligand-binding face of the semaphorins, domain 2"/>
    <property type="match status" value="1"/>
</dbReference>
<dbReference type="Gene3D" id="2.60.40.1510">
    <property type="entry name" value="ntegrin, alpha v. Chain A, domain 3"/>
    <property type="match status" value="1"/>
</dbReference>
<dbReference type="Gene3D" id="3.40.50.410">
    <property type="entry name" value="von Willebrand factor, type A domain"/>
    <property type="match status" value="1"/>
</dbReference>
<dbReference type="InterPro" id="IPR013111">
    <property type="entry name" value="EGF_extracell"/>
</dbReference>
<dbReference type="InterPro" id="IPR040622">
    <property type="entry name" value="I-EGF_1"/>
</dbReference>
<dbReference type="InterPro" id="IPR033760">
    <property type="entry name" value="Integrin_beta_N"/>
</dbReference>
<dbReference type="InterPro" id="IPR015812">
    <property type="entry name" value="Integrin_bsu"/>
</dbReference>
<dbReference type="InterPro" id="IPR014836">
    <property type="entry name" value="Integrin_bsu_cyt_dom"/>
</dbReference>
<dbReference type="InterPro" id="IPR012896">
    <property type="entry name" value="Integrin_bsu_tail"/>
</dbReference>
<dbReference type="InterPro" id="IPR036349">
    <property type="entry name" value="Integrin_bsu_tail_dom_sf"/>
</dbReference>
<dbReference type="InterPro" id="IPR002369">
    <property type="entry name" value="Integrin_bsu_VWA"/>
</dbReference>
<dbReference type="InterPro" id="IPR032695">
    <property type="entry name" value="Integrin_dom_sf"/>
</dbReference>
<dbReference type="InterPro" id="IPR016201">
    <property type="entry name" value="PSI"/>
</dbReference>
<dbReference type="InterPro" id="IPR036465">
    <property type="entry name" value="vWFA_dom_sf"/>
</dbReference>
<dbReference type="PANTHER" id="PTHR10082">
    <property type="entry name" value="INTEGRIN BETA SUBUNIT"/>
    <property type="match status" value="1"/>
</dbReference>
<dbReference type="PANTHER" id="PTHR10082:SF25">
    <property type="entry name" value="INTEGRIN BETA-3"/>
    <property type="match status" value="1"/>
</dbReference>
<dbReference type="Pfam" id="PF07974">
    <property type="entry name" value="EGF_2"/>
    <property type="match status" value="1"/>
</dbReference>
<dbReference type="Pfam" id="PF23105">
    <property type="entry name" value="EGF_integrin"/>
    <property type="match status" value="1"/>
</dbReference>
<dbReference type="Pfam" id="PF18372">
    <property type="entry name" value="I-EGF_1"/>
    <property type="match status" value="1"/>
</dbReference>
<dbReference type="Pfam" id="PF08725">
    <property type="entry name" value="Integrin_b_cyt"/>
    <property type="match status" value="1"/>
</dbReference>
<dbReference type="Pfam" id="PF07965">
    <property type="entry name" value="Integrin_B_tail"/>
    <property type="match status" value="1"/>
</dbReference>
<dbReference type="Pfam" id="PF00362">
    <property type="entry name" value="Integrin_beta"/>
    <property type="match status" value="1"/>
</dbReference>
<dbReference type="Pfam" id="PF17205">
    <property type="entry name" value="PSI_integrin"/>
    <property type="match status" value="1"/>
</dbReference>
<dbReference type="PIRSF" id="PIRSF002512">
    <property type="entry name" value="Integrin_B"/>
    <property type="match status" value="1"/>
</dbReference>
<dbReference type="PRINTS" id="PR01186">
    <property type="entry name" value="INTEGRINB"/>
</dbReference>
<dbReference type="SMART" id="SM00187">
    <property type="entry name" value="INB"/>
    <property type="match status" value="1"/>
</dbReference>
<dbReference type="SMART" id="SM01241">
    <property type="entry name" value="Integrin_b_cyt"/>
    <property type="match status" value="1"/>
</dbReference>
<dbReference type="SMART" id="SM01242">
    <property type="entry name" value="Integrin_B_tail"/>
    <property type="match status" value="1"/>
</dbReference>
<dbReference type="SMART" id="SM00423">
    <property type="entry name" value="PSI"/>
    <property type="match status" value="1"/>
</dbReference>
<dbReference type="SUPFAM" id="SSF57196">
    <property type="entry name" value="EGF/Laminin"/>
    <property type="match status" value="2"/>
</dbReference>
<dbReference type="SUPFAM" id="SSF69687">
    <property type="entry name" value="Integrin beta tail domain"/>
    <property type="match status" value="1"/>
</dbReference>
<dbReference type="SUPFAM" id="SSF69179">
    <property type="entry name" value="Integrin domains"/>
    <property type="match status" value="1"/>
</dbReference>
<dbReference type="SUPFAM" id="SSF103575">
    <property type="entry name" value="Plexin repeat"/>
    <property type="match status" value="1"/>
</dbReference>
<dbReference type="SUPFAM" id="SSF53300">
    <property type="entry name" value="vWA-like"/>
    <property type="match status" value="1"/>
</dbReference>
<dbReference type="PROSITE" id="PS00022">
    <property type="entry name" value="EGF_1"/>
    <property type="match status" value="2"/>
</dbReference>
<dbReference type="PROSITE" id="PS01186">
    <property type="entry name" value="EGF_2"/>
    <property type="match status" value="1"/>
</dbReference>
<dbReference type="PROSITE" id="PS00243">
    <property type="entry name" value="I_EGF_1"/>
    <property type="match status" value="3"/>
</dbReference>
<dbReference type="PROSITE" id="PS52047">
    <property type="entry name" value="I_EGF_2"/>
    <property type="match status" value="4"/>
</dbReference>
<organism evidence="9">
    <name type="scientific">Rattus norvegicus</name>
    <name type="common">Rat</name>
    <dbReference type="NCBI Taxonomy" id="10116"/>
    <lineage>
        <taxon>Eukaryota</taxon>
        <taxon>Metazoa</taxon>
        <taxon>Chordata</taxon>
        <taxon>Craniata</taxon>
        <taxon>Vertebrata</taxon>
        <taxon>Euteleostomi</taxon>
        <taxon>Mammalia</taxon>
        <taxon>Eutheria</taxon>
        <taxon>Euarchontoglires</taxon>
        <taxon>Glires</taxon>
        <taxon>Rodentia</taxon>
        <taxon>Myomorpha</taxon>
        <taxon>Muroidea</taxon>
        <taxon>Muridae</taxon>
        <taxon>Murinae</taxon>
        <taxon>Rattus</taxon>
    </lineage>
</organism>
<comment type="function">
    <text evidence="1 2 5 7">Integrin alpha-V/beta-3 (ITGAV:ITGB3) is a receptor for cytotactin, fibronectin, laminin, matrix metalloproteinase-2, osteopontin, osteomodulin, prothrombin, thrombospondin, vitronectin and von Willebrand factor. Integrin alpha-IIB/beta-3 (ITGA2B:ITGB3) is a receptor for fibronectin, fibrinogen, plasminogen, prothrombin, thrombospondin and vitronectin. Integrins alpha-IIB/beta-3 and alpha-V/beta-3 recognize the sequence R-G-D in a wide array of ligands. Integrin alpha-IIB/beta-3 recognizes the sequence H-H-L-G-G-G-A-K-Q-A-G-D-V in fibrinogen gamma chain. Following activation integrin alpha-IIB/beta-3 brings about platelet/platelet interaction through binding of soluble fibrinogen. This step leads to rapid platelet aggregation which physically plugs ruptured endothelial surfaces. Fibrinogen binding enhances SELP expression in activated platelets (By similarity). ITGAV:ITGB3 binds to fractalkine (CX3CL1) and acts as its coreceptor in CX3CR1-dependent fractalkine signaling. ITGAV:ITGB3 binds to NRG1 (via EGF domain) and this binding is essential for NRG1-ERBB signaling. ITGAV:ITGB3 binds to FGF1 and this binding is essential for FGF1 signaling. ITGAV:ITGB3 binds to FGF2 and this binding is essential for FGF2 signaling (By similarity). ITGAV:ITGB3 binds to IGF1 and this binding is essential for IGF1 signaling (By similarity). ITGAV:ITGB3 binds to IGF2 and this binding is essential for IGF2 signaling (By similarity). ITGAV:ITGB3 binds to IL1B and this binding is essential for IL1B signaling (By similarity). ITGAV:ITGB3 binds to PLA2G2A via a site (site 2) which is distinct from the classical ligand-binding site (site 1) and this induces integrin conformational changes and enhanced ligand binding to site 1 (By similarity). ITGAV:ITGB3 acts as a receptor for fibrillin-1 (FBN1) and mediates R-G-D-dependent cell adhesion to FBN1 (By similarity). In brain, plays a role in synaptic transmission and plasticity. Involved in the regulation of the serotonin neurotransmission, is required to localize to specific compartments within the synapse the serotonin receptor SLC6A4 and for an appropriate reuptake of serotonin (By similarity). Controls excitatory synaptic strength by regulating GRIA2-containing AMPAR endocytosis, which affects AMPAR abundance and composition (PubMed:18549786). ITGAV:ITGB3 acts as a receptor for CD40LG (By similarity). ITGAV:ITGB3 acts as a receptor for IBSP and promotes cell adhesion and migration to IBSP (PubMed:10640428).</text>
</comment>
<comment type="subunit">
    <text evidence="1 2 6">Heterodimer of an alpha and a beta subunit (By similarity). Beta-3 (ITGB3) associates with either alpha-IIB (ITGA2B) or alpha-V (ITGAV). Interacts with FLNB and COMP (By similarity). Interacts with PDIA6 following platelet stimulation (By similarity). Interacts with SYK; upon activation by ITGB3 promotes platelet adhesion (By similarity). Interacts with MYO10 (By similarity). Interacts with DAB2. Interacts with FERMT2. Integrin ITGAV:ITGB3 interacts with FBLN5 (via N-terminus) (By similarity). Interacts with EMP2; regulates the levels of the heterodimer ITGA5:ITGB3 integrin expression on the plasma membrane (By similarity). ITGAV:ITGB3 interacts with CCN3 (By similarity). ITGAV:ITGB3 and ITGA2B:ITGB3 interact with SELP (via C-type lectin domain); the interaction mediates cell-cell interaction and adhesion (By similarity). ITGAV:ITGB3 interacts with AGRA2 (By similarity). ITGAV:ITGB3 is found in a ternary complex with CX3CR1 and CX3CL1. ITGAV:ITGB3 is found in a ternary complex with NRG1 and ERBB3. ITGAV:ITGB3 is found in a ternary complex with FGF1 and FGFR1. ITGAV:ITGB3 interacts with FGF2; it is likely that FGF2 can simultaneously bind ITGAV:ITGB3 and FGF receptors (By similarity). ITGAV:ITGB3 binds to IL1B (By similarity). ITGAV:ITGB3 is found in a ternary complex with IGF1 and IGF1R (By similarity). ITGAV:ITGB3 interacts with IGF2 (By similarity). ITGAV:ITGB3 interacts with FBN1 (By similarity). ITGAV:ITGB3 interacts with CD9, CD81 and CD151 (via second extracellular domain) (By similarity). Interacts (via the allosteric site (site 2)) with CXCL12 in a CXCR4-independent manner (By similarity). Interacts with MXRA8/DICAM; the interaction inhibits ITGAV:ITGB3 heterodimer formation (By similarity). ITGAV:ITGB3 interacts with PTN. Forms a complex with PTPRZ1 and PTN that stimulates endothelial cell migration through ITGB3 Tyr-772 phosphorylation (By similarity). ITGAV:ITGB3 interacts with SLC6A4 (By similarity). Interacts with SLC6A4 (via C-terminus); this interaction regulates SLC6A4 trafficking (PubMed:18317590). ITGA2B:ITGB3 interacts with PPIA/CYPA; the interaction is ROS and PPIase activity-dependent and is increased in the presence of thrombin (By similarity). Interacts with tensin TNS3; TNS3 also interacts with PEAK1, thus acting as an adapter molecule to bridge the association of PEAK1 with ITGB3 (By similarity). Interacts with TM4SF19 (By similarity).</text>
</comment>
<comment type="subcellular location">
    <subcellularLocation>
        <location evidence="2">Cell membrane</location>
        <topology evidence="2">Single-pass type I membrane protein</topology>
    </subcellularLocation>
    <subcellularLocation>
        <location evidence="2">Cell projection</location>
        <location evidence="2">Lamellipodium membrane</location>
    </subcellularLocation>
    <subcellularLocation>
        <location evidence="1">Cell junction</location>
        <location evidence="1">Focal adhesion</location>
    </subcellularLocation>
    <subcellularLocation>
        <location evidence="7">Postsynaptic cell membrane</location>
        <topology evidence="8">Single-pass type I membrane protein</topology>
    </subcellularLocation>
    <subcellularLocation>
        <location evidence="1">Synapse</location>
    </subcellularLocation>
</comment>
<comment type="domain">
    <text evidence="2">The VWFA domain (or beta I domain) contains three cation-binding sites: the ligand-associated metal ion-binding site (LIMBS or SyMBS), the metal ion-dependent adhesion site (MIDAS), and the adjacent MIDAS site (ADMIDAS). This domain is also part of the ligand-binding site.</text>
</comment>
<comment type="PTM">
    <text evidence="2">Phosphorylated on tyrosine residues in response to thrombin-induced platelet aggregation. Probably involved in outside-in signaling.</text>
</comment>
<comment type="similarity">
    <text evidence="8">Belongs to the integrin beta chain family.</text>
</comment>
<feature type="signal peptide" evidence="3">
    <location>
        <begin position="1"/>
        <end position="25"/>
    </location>
</feature>
<feature type="chain" id="PRO_5004312362" description="Integrin beta-3" evidence="3">
    <location>
        <begin position="26"/>
        <end position="787"/>
    </location>
</feature>
<feature type="topological domain" description="Extracellular" evidence="3">
    <location>
        <begin position="27"/>
        <end position="717"/>
    </location>
</feature>
<feature type="transmembrane region" description="Helical" evidence="3">
    <location>
        <begin position="718"/>
        <end position="738"/>
    </location>
</feature>
<feature type="topological domain" description="Cytoplasmic" evidence="3">
    <location>
        <begin position="739"/>
        <end position="787"/>
    </location>
</feature>
<feature type="domain" description="PSI" evidence="3">
    <location>
        <begin position="29"/>
        <end position="75"/>
    </location>
</feature>
<feature type="domain" description="VWFA" evidence="2">
    <location>
        <begin position="134"/>
        <end position="376"/>
    </location>
</feature>
<feature type="domain" description="I-EGF 1" evidence="4">
    <location>
        <begin position="462"/>
        <end position="497"/>
    </location>
</feature>
<feature type="domain" description="I-EGF 2" evidence="4">
    <location>
        <begin position="498"/>
        <end position="547"/>
    </location>
</feature>
<feature type="domain" description="I-EGF 3" evidence="4">
    <location>
        <begin position="548"/>
        <end position="584"/>
    </location>
</feature>
<feature type="domain" description="I-EGF 4" evidence="4">
    <location>
        <begin position="585"/>
        <end position="624"/>
    </location>
</feature>
<feature type="region of interest" description="CX3CL1-binding" evidence="2">
    <location>
        <begin position="202"/>
        <end position="209"/>
    </location>
</feature>
<feature type="region of interest" description="Involved in CX3CL1-, NRG1-, FGF1- and IGF1-binding" evidence="2">
    <location>
        <begin position="202"/>
        <end position="209"/>
    </location>
</feature>
<feature type="region of interest" description="CX3CL1-binding" evidence="2">
    <location>
        <begin position="292"/>
        <end position="312"/>
    </location>
</feature>
<feature type="short sequence motif" description="LIR" evidence="2">
    <location>
        <begin position="776"/>
        <end position="782"/>
    </location>
</feature>
<feature type="binding site" description="in MIDAS binding site" evidence="2">
    <location>
        <position position="146"/>
    </location>
    <ligand>
        <name>Mg(2+)</name>
        <dbReference type="ChEBI" id="CHEBI:18420"/>
    </ligand>
</feature>
<feature type="binding site" description="in ADMIDAS binding site" evidence="2">
    <location>
        <position position="148"/>
    </location>
    <ligand>
        <name>Ca(2+)</name>
        <dbReference type="ChEBI" id="CHEBI:29108"/>
        <label>1</label>
    </ligand>
</feature>
<feature type="binding site" description="in MIDAS binding site" evidence="2">
    <location>
        <position position="148"/>
    </location>
    <ligand>
        <name>Mg(2+)</name>
        <dbReference type="ChEBI" id="CHEBI:18420"/>
    </ligand>
</feature>
<feature type="binding site" description="in ADMIDAS binding site" evidence="2">
    <location>
        <position position="151"/>
    </location>
    <ligand>
        <name>Ca(2+)</name>
        <dbReference type="ChEBI" id="CHEBI:29108"/>
        <label>1</label>
    </ligand>
</feature>
<feature type="binding site" description="in ADMIDAS binding site" evidence="2">
    <location>
        <position position="152"/>
    </location>
    <ligand>
        <name>Ca(2+)</name>
        <dbReference type="ChEBI" id="CHEBI:29108"/>
        <label>1</label>
    </ligand>
</feature>
<feature type="binding site" description="in LIMBS binding site" evidence="2">
    <location>
        <position position="183"/>
    </location>
    <ligand>
        <name>Ca(2+)</name>
        <dbReference type="ChEBI" id="CHEBI:29108"/>
        <label>2</label>
    </ligand>
</feature>
<feature type="binding site" description="in LIMBS binding site" evidence="2">
    <location>
        <position position="240"/>
    </location>
    <ligand>
        <name>Ca(2+)</name>
        <dbReference type="ChEBI" id="CHEBI:29108"/>
        <label>2</label>
    </ligand>
</feature>
<feature type="binding site" description="in LIMBS binding site" evidence="2">
    <location>
        <position position="242"/>
    </location>
    <ligand>
        <name>Ca(2+)</name>
        <dbReference type="ChEBI" id="CHEBI:29108"/>
        <label>2</label>
    </ligand>
</feature>
<feature type="binding site" description="in LIMBS binding site" evidence="2">
    <location>
        <position position="244"/>
    </location>
    <ligand>
        <name>Ca(2+)</name>
        <dbReference type="ChEBI" id="CHEBI:29108"/>
        <label>2</label>
    </ligand>
</feature>
<feature type="binding site" description="in LIMBS binding site" evidence="2">
    <location>
        <position position="245"/>
    </location>
    <ligand>
        <name>Ca(2+)</name>
        <dbReference type="ChEBI" id="CHEBI:29108"/>
        <label>2</label>
    </ligand>
</feature>
<feature type="binding site" description="in MIDAS binding site" evidence="2">
    <location>
        <position position="245"/>
    </location>
    <ligand>
        <name>Mg(2+)</name>
        <dbReference type="ChEBI" id="CHEBI:18420"/>
    </ligand>
</feature>
<feature type="binding site" description="in ADMIDAS binding site and liganded-open conformation" evidence="2">
    <location>
        <position position="276"/>
    </location>
    <ligand>
        <name>Ca(2+)</name>
        <dbReference type="ChEBI" id="CHEBI:29108"/>
        <label>1</label>
    </ligand>
</feature>
<feature type="binding site" description="in LIMBS binding site" evidence="2">
    <location>
        <position position="276"/>
    </location>
    <ligand>
        <name>Ca(2+)</name>
        <dbReference type="ChEBI" id="CHEBI:29108"/>
        <label>2</label>
    </ligand>
</feature>
<feature type="modified residue" description="Phosphothreonine" evidence="1">
    <location>
        <position position="766"/>
    </location>
</feature>
<feature type="modified residue" description="Phosphotyrosine" evidence="2">
    <location>
        <position position="772"/>
    </location>
</feature>
<feature type="modified residue" description="Phosphothreonine" evidence="2">
    <location>
        <position position="778"/>
    </location>
</feature>
<feature type="modified residue" description="Phosphotyrosine" evidence="2">
    <location>
        <position position="784"/>
    </location>
</feature>
<feature type="glycosylation site" description="N-linked (GlcNAc...) asparagine" evidence="3">
    <location>
        <position position="345"/>
    </location>
</feature>
<feature type="glycosylation site" description="N-linked (GlcNAc...) asparagine" evidence="3">
    <location>
        <position position="396"/>
    </location>
</feature>
<feature type="glycosylation site" description="N-linked (GlcNAc...) asparagine" evidence="3">
    <location>
        <position position="477"/>
    </location>
</feature>
<feature type="glycosylation site" description="N-linked (GlcNAc...) asparagine" evidence="3">
    <location>
        <position position="584"/>
    </location>
</feature>
<feature type="glycosylation site" description="N-linked (GlcNAc...) asparagine" evidence="3">
    <location>
        <position position="679"/>
    </location>
</feature>
<feature type="disulfide bond" evidence="2">
    <location>
        <begin position="30"/>
        <end position="48"/>
    </location>
</feature>
<feature type="disulfide bond" evidence="2">
    <location>
        <begin position="38"/>
        <end position="460"/>
    </location>
</feature>
<feature type="disulfide bond" evidence="2">
    <location>
        <begin position="41"/>
        <end position="63"/>
    </location>
</feature>
<feature type="disulfide bond" evidence="2">
    <location>
        <begin position="51"/>
        <end position="74"/>
    </location>
</feature>
<feature type="disulfide bond" evidence="2">
    <location>
        <begin position="202"/>
        <end position="209"/>
    </location>
</feature>
<feature type="disulfide bond" evidence="2">
    <location>
        <begin position="257"/>
        <end position="298"/>
    </location>
</feature>
<feature type="disulfide bond" evidence="2">
    <location>
        <begin position="399"/>
        <end position="411"/>
    </location>
</feature>
<feature type="disulfide bond" evidence="2">
    <location>
        <begin position="431"/>
        <end position="458"/>
    </location>
</feature>
<feature type="disulfide bond" evidence="4">
    <location>
        <begin position="462"/>
        <end position="482"/>
    </location>
</feature>
<feature type="disulfide bond" evidence="4">
    <location>
        <begin position="473"/>
        <end position="485"/>
    </location>
</feature>
<feature type="disulfide bond" evidence="4">
    <location>
        <begin position="487"/>
        <end position="496"/>
    </location>
</feature>
<feature type="disulfide bond" evidence="4">
    <location>
        <begin position="498"/>
        <end position="528"/>
    </location>
</feature>
<feature type="disulfide bond" evidence="4">
    <location>
        <begin position="511"/>
        <end position="526"/>
    </location>
</feature>
<feature type="disulfide bond" evidence="4">
    <location>
        <begin position="520"/>
        <end position="531"/>
    </location>
</feature>
<feature type="disulfide bond" evidence="4">
    <location>
        <begin position="533"/>
        <end position="546"/>
    </location>
</feature>
<feature type="disulfide bond" evidence="4">
    <location>
        <begin position="548"/>
        <end position="569"/>
    </location>
</feature>
<feature type="disulfide bond" evidence="4">
    <location>
        <begin position="553"/>
        <end position="567"/>
    </location>
</feature>
<feature type="disulfide bond" evidence="4">
    <location>
        <begin position="561"/>
        <end position="572"/>
    </location>
</feature>
<feature type="disulfide bond" evidence="4">
    <location>
        <begin position="574"/>
        <end position="583"/>
    </location>
</feature>
<feature type="disulfide bond" evidence="4">
    <location>
        <begin position="585"/>
        <end position="608"/>
    </location>
</feature>
<feature type="disulfide bond" evidence="4">
    <location>
        <begin position="592"/>
        <end position="606"/>
    </location>
</feature>
<feature type="disulfide bond" evidence="4">
    <location>
        <begin position="600"/>
        <end position="611"/>
    </location>
</feature>
<feature type="disulfide bond" evidence="4">
    <location>
        <begin position="613"/>
        <end position="623"/>
    </location>
</feature>
<feature type="disulfide bond" evidence="2">
    <location>
        <begin position="626"/>
        <end position="629"/>
    </location>
</feature>
<feature type="disulfide bond" evidence="2">
    <location>
        <begin position="633"/>
        <end position="680"/>
    </location>
</feature>
<feature type="disulfide bond" evidence="2">
    <location>
        <begin position="639"/>
        <end position="660"/>
    </location>
</feature>
<feature type="disulfide bond" evidence="2">
    <location>
        <begin position="642"/>
        <end position="656"/>
    </location>
</feature>
<feature type="disulfide bond" evidence="2">
    <location>
        <begin position="688"/>
        <end position="712"/>
    </location>
</feature>
<protein>
    <recommendedName>
        <fullName evidence="8">Integrin beta-3</fullName>
    </recommendedName>
    <alternativeName>
        <fullName evidence="8">Platelet membrane glycoprotein IIIa</fullName>
        <shortName evidence="8">GPIIIa</shortName>
    </alternativeName>
</protein>